<sequence length="649" mass="71887">MGEAVYPVPAEWAQNALVDEARYQDMYRQSVDDPEGFWAEHGKRIDWIRPFTKVKNTSFHEADFGIRWFEDGTLNLAANCLDRHLAERGDEIAILWEPDSPDEAHREITYRQLHADVCRFANLLKAKGVQKGERVTIYLPMVPEAAVAMLACARIGAIHSIVFAGFSPDALAGRITDCDSRIVLTSDEGLRGGRKVPLKANVDEALKQCPGVDTVIMLRRTGADVDFVEGRDIDWATAVAEQSADCQPEEMNAEDPLFILYTSGSTGKPKGVLHTTGGYSVWASMTHQYVFDYRPGQIYWCAADIGWVTGHSYVVYGPLMNGATTVMFEGVPNFPDASRFWQVVDKFKVEIFYGAPTALRALMREGDEWVKKTSRASLRLLGSVGEPINPEAWEWYHKVVGDSRCPIVDTWWQTETGGAMITPLPGATALKPGSASRPFFGVKPALVDNDGTFLEGATDGCLVVTDSWPGQMRTVWGDHERFFQTYFTTFKGLYFTGDGCRRDEDGYYWITGRIDDVINVSGHRMGTAEIESALVAHPKVAEAAVVGMPHDIKGQGIYAFVTCNAEIEPDDLLRKELIQWVRHEIGPIATPDVIQFAPGLPKTRSGKIMRRILRKIGENDVSNLGDTSTLADPSVVDNLLANRPQLAGA</sequence>
<dbReference type="EC" id="6.2.1.1" evidence="1"/>
<dbReference type="EMBL" id="CP000248">
    <property type="protein sequence ID" value="ABD27061.1"/>
    <property type="molecule type" value="Genomic_DNA"/>
</dbReference>
<dbReference type="RefSeq" id="WP_011446267.1">
    <property type="nucleotide sequence ID" value="NC_007794.1"/>
</dbReference>
<dbReference type="SMR" id="Q2G512"/>
<dbReference type="STRING" id="279238.Saro_2625"/>
<dbReference type="KEGG" id="nar:Saro_2625"/>
<dbReference type="eggNOG" id="COG0365">
    <property type="taxonomic scope" value="Bacteria"/>
</dbReference>
<dbReference type="HOGENOM" id="CLU_000022_3_6_5"/>
<dbReference type="Proteomes" id="UP000009134">
    <property type="component" value="Chromosome"/>
</dbReference>
<dbReference type="GO" id="GO:0005829">
    <property type="term" value="C:cytosol"/>
    <property type="evidence" value="ECO:0007669"/>
    <property type="project" value="TreeGrafter"/>
</dbReference>
<dbReference type="GO" id="GO:0003987">
    <property type="term" value="F:acetate-CoA ligase activity"/>
    <property type="evidence" value="ECO:0007669"/>
    <property type="project" value="UniProtKB-UniRule"/>
</dbReference>
<dbReference type="GO" id="GO:0016208">
    <property type="term" value="F:AMP binding"/>
    <property type="evidence" value="ECO:0007669"/>
    <property type="project" value="InterPro"/>
</dbReference>
<dbReference type="GO" id="GO:0005524">
    <property type="term" value="F:ATP binding"/>
    <property type="evidence" value="ECO:0007669"/>
    <property type="project" value="UniProtKB-KW"/>
</dbReference>
<dbReference type="GO" id="GO:0046872">
    <property type="term" value="F:metal ion binding"/>
    <property type="evidence" value="ECO:0007669"/>
    <property type="project" value="UniProtKB-KW"/>
</dbReference>
<dbReference type="GO" id="GO:0019427">
    <property type="term" value="P:acetyl-CoA biosynthetic process from acetate"/>
    <property type="evidence" value="ECO:0007669"/>
    <property type="project" value="InterPro"/>
</dbReference>
<dbReference type="CDD" id="cd05966">
    <property type="entry name" value="ACS"/>
    <property type="match status" value="1"/>
</dbReference>
<dbReference type="FunFam" id="3.30.300.30:FF:000004">
    <property type="entry name" value="Acetyl-coenzyme A synthetase"/>
    <property type="match status" value="1"/>
</dbReference>
<dbReference type="FunFam" id="3.40.50.12780:FF:000001">
    <property type="entry name" value="Acetyl-coenzyme A synthetase"/>
    <property type="match status" value="1"/>
</dbReference>
<dbReference type="Gene3D" id="3.30.300.30">
    <property type="match status" value="1"/>
</dbReference>
<dbReference type="Gene3D" id="3.40.50.12780">
    <property type="entry name" value="N-terminal domain of ligase-like"/>
    <property type="match status" value="1"/>
</dbReference>
<dbReference type="HAMAP" id="MF_01123">
    <property type="entry name" value="Ac_CoA_synth"/>
    <property type="match status" value="1"/>
</dbReference>
<dbReference type="InterPro" id="IPR011904">
    <property type="entry name" value="Ac_CoA_lig"/>
</dbReference>
<dbReference type="InterPro" id="IPR032387">
    <property type="entry name" value="ACAS_N"/>
</dbReference>
<dbReference type="InterPro" id="IPR025110">
    <property type="entry name" value="AMP-bd_C"/>
</dbReference>
<dbReference type="InterPro" id="IPR045851">
    <property type="entry name" value="AMP-bd_C_sf"/>
</dbReference>
<dbReference type="InterPro" id="IPR020845">
    <property type="entry name" value="AMP-binding_CS"/>
</dbReference>
<dbReference type="InterPro" id="IPR000873">
    <property type="entry name" value="AMP-dep_synth/lig_dom"/>
</dbReference>
<dbReference type="InterPro" id="IPR042099">
    <property type="entry name" value="ANL_N_sf"/>
</dbReference>
<dbReference type="NCBIfam" id="TIGR02188">
    <property type="entry name" value="Ac_CoA_lig_AcsA"/>
    <property type="match status" value="1"/>
</dbReference>
<dbReference type="NCBIfam" id="NF001208">
    <property type="entry name" value="PRK00174.1"/>
    <property type="match status" value="1"/>
</dbReference>
<dbReference type="PANTHER" id="PTHR24095">
    <property type="entry name" value="ACETYL-COENZYME A SYNTHETASE"/>
    <property type="match status" value="1"/>
</dbReference>
<dbReference type="PANTHER" id="PTHR24095:SF243">
    <property type="entry name" value="ACETYL-COENZYME A SYNTHETASE"/>
    <property type="match status" value="1"/>
</dbReference>
<dbReference type="Pfam" id="PF16177">
    <property type="entry name" value="ACAS_N"/>
    <property type="match status" value="1"/>
</dbReference>
<dbReference type="Pfam" id="PF00501">
    <property type="entry name" value="AMP-binding"/>
    <property type="match status" value="1"/>
</dbReference>
<dbReference type="Pfam" id="PF13193">
    <property type="entry name" value="AMP-binding_C"/>
    <property type="match status" value="1"/>
</dbReference>
<dbReference type="SUPFAM" id="SSF56801">
    <property type="entry name" value="Acetyl-CoA synthetase-like"/>
    <property type="match status" value="1"/>
</dbReference>
<dbReference type="PROSITE" id="PS00455">
    <property type="entry name" value="AMP_BINDING"/>
    <property type="match status" value="1"/>
</dbReference>
<organism>
    <name type="scientific">Novosphingobium aromaticivorans (strain ATCC 700278 / DSM 12444 / CCUG 56034 / CIP 105152 / NBRC 16084 / F199)</name>
    <dbReference type="NCBI Taxonomy" id="279238"/>
    <lineage>
        <taxon>Bacteria</taxon>
        <taxon>Pseudomonadati</taxon>
        <taxon>Pseudomonadota</taxon>
        <taxon>Alphaproteobacteria</taxon>
        <taxon>Sphingomonadales</taxon>
        <taxon>Sphingomonadaceae</taxon>
        <taxon>Novosphingobium</taxon>
    </lineage>
</organism>
<feature type="chain" id="PRO_1000065299" description="Acetyl-coenzyme A synthetase">
    <location>
        <begin position="1"/>
        <end position="649"/>
    </location>
</feature>
<feature type="binding site" evidence="1">
    <location>
        <begin position="191"/>
        <end position="194"/>
    </location>
    <ligand>
        <name>CoA</name>
        <dbReference type="ChEBI" id="CHEBI:57287"/>
    </ligand>
</feature>
<feature type="binding site" evidence="1">
    <location>
        <position position="309"/>
    </location>
    <ligand>
        <name>CoA</name>
        <dbReference type="ChEBI" id="CHEBI:57287"/>
    </ligand>
</feature>
<feature type="binding site" evidence="1">
    <location>
        <position position="333"/>
    </location>
    <ligand>
        <name>CoA</name>
        <dbReference type="ChEBI" id="CHEBI:57287"/>
    </ligand>
</feature>
<feature type="binding site" evidence="1">
    <location>
        <begin position="385"/>
        <end position="387"/>
    </location>
    <ligand>
        <name>ATP</name>
        <dbReference type="ChEBI" id="CHEBI:30616"/>
    </ligand>
</feature>
<feature type="binding site" evidence="1">
    <location>
        <begin position="409"/>
        <end position="414"/>
    </location>
    <ligand>
        <name>ATP</name>
        <dbReference type="ChEBI" id="CHEBI:30616"/>
    </ligand>
</feature>
<feature type="binding site" evidence="1">
    <location>
        <position position="498"/>
    </location>
    <ligand>
        <name>ATP</name>
        <dbReference type="ChEBI" id="CHEBI:30616"/>
    </ligand>
</feature>
<feature type="binding site" evidence="1">
    <location>
        <position position="513"/>
    </location>
    <ligand>
        <name>ATP</name>
        <dbReference type="ChEBI" id="CHEBI:30616"/>
    </ligand>
</feature>
<feature type="binding site" evidence="1">
    <location>
        <position position="521"/>
    </location>
    <ligand>
        <name>CoA</name>
        <dbReference type="ChEBI" id="CHEBI:57287"/>
    </ligand>
</feature>
<feature type="binding site" evidence="1">
    <location>
        <position position="524"/>
    </location>
    <ligand>
        <name>ATP</name>
        <dbReference type="ChEBI" id="CHEBI:30616"/>
    </ligand>
</feature>
<feature type="binding site" evidence="1">
    <location>
        <position position="535"/>
    </location>
    <ligand>
        <name>Mg(2+)</name>
        <dbReference type="ChEBI" id="CHEBI:18420"/>
    </ligand>
</feature>
<feature type="binding site" evidence="1">
    <location>
        <position position="537"/>
    </location>
    <ligand>
        <name>Mg(2+)</name>
        <dbReference type="ChEBI" id="CHEBI:18420"/>
    </ligand>
</feature>
<feature type="binding site" evidence="1">
    <location>
        <position position="540"/>
    </location>
    <ligand>
        <name>Mg(2+)</name>
        <dbReference type="ChEBI" id="CHEBI:18420"/>
    </ligand>
</feature>
<feature type="binding site" evidence="1">
    <location>
        <position position="582"/>
    </location>
    <ligand>
        <name>CoA</name>
        <dbReference type="ChEBI" id="CHEBI:57287"/>
    </ligand>
</feature>
<feature type="modified residue" description="N6-acetyllysine" evidence="1">
    <location>
        <position position="607"/>
    </location>
</feature>
<evidence type="ECO:0000255" key="1">
    <source>
        <dbReference type="HAMAP-Rule" id="MF_01123"/>
    </source>
</evidence>
<accession>Q2G512</accession>
<reference key="1">
    <citation type="submission" date="2006-01" db="EMBL/GenBank/DDBJ databases">
        <title>Complete sequence of Novosphingobium aromaticivorans DSM 12444.</title>
        <authorList>
            <consortium name="US DOE Joint Genome Institute"/>
            <person name="Copeland A."/>
            <person name="Lucas S."/>
            <person name="Lapidus A."/>
            <person name="Barry K."/>
            <person name="Detter J.C."/>
            <person name="Glavina T."/>
            <person name="Hammon N."/>
            <person name="Israni S."/>
            <person name="Pitluck S."/>
            <person name="Chain P."/>
            <person name="Malfatti S."/>
            <person name="Shin M."/>
            <person name="Vergez L."/>
            <person name="Schmutz J."/>
            <person name="Larimer F."/>
            <person name="Land M."/>
            <person name="Kyrpides N."/>
            <person name="Ivanova N."/>
            <person name="Fredrickson J."/>
            <person name="Balkwill D."/>
            <person name="Romine M.F."/>
            <person name="Richardson P."/>
        </authorList>
    </citation>
    <scope>NUCLEOTIDE SEQUENCE [LARGE SCALE GENOMIC DNA]</scope>
    <source>
        <strain>ATCC 700278 / DSM 12444 / CCUG 56034 / CIP 105152 / NBRC 16084 / F199</strain>
    </source>
</reference>
<proteinExistence type="inferred from homology"/>
<keyword id="KW-0007">Acetylation</keyword>
<keyword id="KW-0067">ATP-binding</keyword>
<keyword id="KW-0436">Ligase</keyword>
<keyword id="KW-0460">Magnesium</keyword>
<keyword id="KW-0479">Metal-binding</keyword>
<keyword id="KW-0547">Nucleotide-binding</keyword>
<keyword id="KW-1185">Reference proteome</keyword>
<protein>
    <recommendedName>
        <fullName evidence="1">Acetyl-coenzyme A synthetase</fullName>
        <shortName evidence="1">AcCoA synthetase</shortName>
        <shortName evidence="1">Acs</shortName>
        <ecNumber evidence="1">6.2.1.1</ecNumber>
    </recommendedName>
    <alternativeName>
        <fullName evidence="1">Acetate--CoA ligase</fullName>
    </alternativeName>
    <alternativeName>
        <fullName evidence="1">Acyl-activating enzyme</fullName>
    </alternativeName>
</protein>
<name>ACSA_NOVAD</name>
<gene>
    <name evidence="1" type="primary">acsA</name>
    <name type="ordered locus">Saro_2625</name>
</gene>
<comment type="function">
    <text evidence="1">Catalyzes the conversion of acetate into acetyl-CoA (AcCoA), an essential intermediate at the junction of anabolic and catabolic pathways. AcsA undergoes a two-step reaction. In the first half reaction, AcsA combines acetate with ATP to form acetyl-adenylate (AcAMP) intermediate. In the second half reaction, it can then transfer the acetyl group from AcAMP to the sulfhydryl group of CoA, forming the product AcCoA.</text>
</comment>
<comment type="catalytic activity">
    <reaction evidence="1">
        <text>acetate + ATP + CoA = acetyl-CoA + AMP + diphosphate</text>
        <dbReference type="Rhea" id="RHEA:23176"/>
        <dbReference type="ChEBI" id="CHEBI:30089"/>
        <dbReference type="ChEBI" id="CHEBI:30616"/>
        <dbReference type="ChEBI" id="CHEBI:33019"/>
        <dbReference type="ChEBI" id="CHEBI:57287"/>
        <dbReference type="ChEBI" id="CHEBI:57288"/>
        <dbReference type="ChEBI" id="CHEBI:456215"/>
        <dbReference type="EC" id="6.2.1.1"/>
    </reaction>
</comment>
<comment type="cofactor">
    <cofactor evidence="1">
        <name>Mg(2+)</name>
        <dbReference type="ChEBI" id="CHEBI:18420"/>
    </cofactor>
</comment>
<comment type="PTM">
    <text evidence="1">Acetylated. Deacetylation by the SIR2-homolog deacetylase activates the enzyme.</text>
</comment>
<comment type="similarity">
    <text evidence="1">Belongs to the ATP-dependent AMP-binding enzyme family.</text>
</comment>